<comment type="function">
    <text evidence="1 2">Subunit of the V0 complex of vacuolar(H+)-ATPase (V-ATPase), a multisubunit enzyme composed of a peripheral complex (V1) that hydrolyzes ATP and a membrane integral complex (V0) that translocates protons (By similarity). V-ATPase is responsible for acidifying and maintaining the pH of intracellular compartments and in some cell types, is targeted to the plasma membrane, where it is responsible for acidifying the extracellular environment (By similarity).</text>
</comment>
<comment type="subunit">
    <text evidence="1">V-ATPase is a heteromultimeric enzyme made up of two complexes: the ATP-hydrolytic V1 complex and the proton translocation V0 complex (By similarity). The V1 complex consists of three catalytic AB heterodimers that form a heterohexamer, three peripheral stalks each consisting of EG heterodimers, one central rotor including subunits D and F, and the regulatory subunits C and H (By similarity). The proton translocation complex V0 consists of the proton transport subunit a, a ring of proteolipid subunits c9c'', rotary subunit d, subunits e and f, and the accessory subunits ATP6AP1/Ac45 and ATP6AP2/PRR (By similarity).</text>
</comment>
<comment type="subcellular location">
    <subcellularLocation>
        <location evidence="3">Membrane</location>
        <topology evidence="3">Multi-pass membrane protein</topology>
    </subcellularLocation>
</comment>
<comment type="similarity">
    <text evidence="4">Belongs to the V-ATPase e1/e2 subunit family.</text>
</comment>
<name>VA0E1_MOUSE</name>
<keyword id="KW-0325">Glycoprotein</keyword>
<keyword id="KW-0375">Hydrogen ion transport</keyword>
<keyword id="KW-0406">Ion transport</keyword>
<keyword id="KW-0472">Membrane</keyword>
<keyword id="KW-1185">Reference proteome</keyword>
<keyword id="KW-0812">Transmembrane</keyword>
<keyword id="KW-1133">Transmembrane helix</keyword>
<keyword id="KW-0813">Transport</keyword>
<protein>
    <recommendedName>
        <fullName>V-type proton ATPase subunit e 1</fullName>
        <shortName>V-ATPase subunit e 1</shortName>
    </recommendedName>
    <alternativeName>
        <fullName>Vacuolar proton pump subunit e 1</fullName>
    </alternativeName>
</protein>
<evidence type="ECO:0000250" key="1">
    <source>
        <dbReference type="UniProtKB" id="O15342"/>
    </source>
</evidence>
<evidence type="ECO:0000250" key="2">
    <source>
        <dbReference type="UniProtKB" id="Q2KIB5"/>
    </source>
</evidence>
<evidence type="ECO:0000255" key="3"/>
<evidence type="ECO:0000305" key="4"/>
<reference key="1">
    <citation type="journal article" date="2005" name="Science">
        <title>The transcriptional landscape of the mammalian genome.</title>
        <authorList>
            <person name="Carninci P."/>
            <person name="Kasukawa T."/>
            <person name="Katayama S."/>
            <person name="Gough J."/>
            <person name="Frith M.C."/>
            <person name="Maeda N."/>
            <person name="Oyama R."/>
            <person name="Ravasi T."/>
            <person name="Lenhard B."/>
            <person name="Wells C."/>
            <person name="Kodzius R."/>
            <person name="Shimokawa K."/>
            <person name="Bajic V.B."/>
            <person name="Brenner S.E."/>
            <person name="Batalov S."/>
            <person name="Forrest A.R."/>
            <person name="Zavolan M."/>
            <person name="Davis M.J."/>
            <person name="Wilming L.G."/>
            <person name="Aidinis V."/>
            <person name="Allen J.E."/>
            <person name="Ambesi-Impiombato A."/>
            <person name="Apweiler R."/>
            <person name="Aturaliya R.N."/>
            <person name="Bailey T.L."/>
            <person name="Bansal M."/>
            <person name="Baxter L."/>
            <person name="Beisel K.W."/>
            <person name="Bersano T."/>
            <person name="Bono H."/>
            <person name="Chalk A.M."/>
            <person name="Chiu K.P."/>
            <person name="Choudhary V."/>
            <person name="Christoffels A."/>
            <person name="Clutterbuck D.R."/>
            <person name="Crowe M.L."/>
            <person name="Dalla E."/>
            <person name="Dalrymple B.P."/>
            <person name="de Bono B."/>
            <person name="Della Gatta G."/>
            <person name="di Bernardo D."/>
            <person name="Down T."/>
            <person name="Engstrom P."/>
            <person name="Fagiolini M."/>
            <person name="Faulkner G."/>
            <person name="Fletcher C.F."/>
            <person name="Fukushima T."/>
            <person name="Furuno M."/>
            <person name="Futaki S."/>
            <person name="Gariboldi M."/>
            <person name="Georgii-Hemming P."/>
            <person name="Gingeras T.R."/>
            <person name="Gojobori T."/>
            <person name="Green R.E."/>
            <person name="Gustincich S."/>
            <person name="Harbers M."/>
            <person name="Hayashi Y."/>
            <person name="Hensch T.K."/>
            <person name="Hirokawa N."/>
            <person name="Hill D."/>
            <person name="Huminiecki L."/>
            <person name="Iacono M."/>
            <person name="Ikeo K."/>
            <person name="Iwama A."/>
            <person name="Ishikawa T."/>
            <person name="Jakt M."/>
            <person name="Kanapin A."/>
            <person name="Katoh M."/>
            <person name="Kawasawa Y."/>
            <person name="Kelso J."/>
            <person name="Kitamura H."/>
            <person name="Kitano H."/>
            <person name="Kollias G."/>
            <person name="Krishnan S.P."/>
            <person name="Kruger A."/>
            <person name="Kummerfeld S.K."/>
            <person name="Kurochkin I.V."/>
            <person name="Lareau L.F."/>
            <person name="Lazarevic D."/>
            <person name="Lipovich L."/>
            <person name="Liu J."/>
            <person name="Liuni S."/>
            <person name="McWilliam S."/>
            <person name="Madan Babu M."/>
            <person name="Madera M."/>
            <person name="Marchionni L."/>
            <person name="Matsuda H."/>
            <person name="Matsuzawa S."/>
            <person name="Miki H."/>
            <person name="Mignone F."/>
            <person name="Miyake S."/>
            <person name="Morris K."/>
            <person name="Mottagui-Tabar S."/>
            <person name="Mulder N."/>
            <person name="Nakano N."/>
            <person name="Nakauchi H."/>
            <person name="Ng P."/>
            <person name="Nilsson R."/>
            <person name="Nishiguchi S."/>
            <person name="Nishikawa S."/>
            <person name="Nori F."/>
            <person name="Ohara O."/>
            <person name="Okazaki Y."/>
            <person name="Orlando V."/>
            <person name="Pang K.C."/>
            <person name="Pavan W.J."/>
            <person name="Pavesi G."/>
            <person name="Pesole G."/>
            <person name="Petrovsky N."/>
            <person name="Piazza S."/>
            <person name="Reed J."/>
            <person name="Reid J.F."/>
            <person name="Ring B.Z."/>
            <person name="Ringwald M."/>
            <person name="Rost B."/>
            <person name="Ruan Y."/>
            <person name="Salzberg S.L."/>
            <person name="Sandelin A."/>
            <person name="Schneider C."/>
            <person name="Schoenbach C."/>
            <person name="Sekiguchi K."/>
            <person name="Semple C.A."/>
            <person name="Seno S."/>
            <person name="Sessa L."/>
            <person name="Sheng Y."/>
            <person name="Shibata Y."/>
            <person name="Shimada H."/>
            <person name="Shimada K."/>
            <person name="Silva D."/>
            <person name="Sinclair B."/>
            <person name="Sperling S."/>
            <person name="Stupka E."/>
            <person name="Sugiura K."/>
            <person name="Sultana R."/>
            <person name="Takenaka Y."/>
            <person name="Taki K."/>
            <person name="Tammoja K."/>
            <person name="Tan S.L."/>
            <person name="Tang S."/>
            <person name="Taylor M.S."/>
            <person name="Tegner J."/>
            <person name="Teichmann S.A."/>
            <person name="Ueda H.R."/>
            <person name="van Nimwegen E."/>
            <person name="Verardo R."/>
            <person name="Wei C.L."/>
            <person name="Yagi K."/>
            <person name="Yamanishi H."/>
            <person name="Zabarovsky E."/>
            <person name="Zhu S."/>
            <person name="Zimmer A."/>
            <person name="Hide W."/>
            <person name="Bult C."/>
            <person name="Grimmond S.M."/>
            <person name="Teasdale R.D."/>
            <person name="Liu E.T."/>
            <person name="Brusic V."/>
            <person name="Quackenbush J."/>
            <person name="Wahlestedt C."/>
            <person name="Mattick J.S."/>
            <person name="Hume D.A."/>
            <person name="Kai C."/>
            <person name="Sasaki D."/>
            <person name="Tomaru Y."/>
            <person name="Fukuda S."/>
            <person name="Kanamori-Katayama M."/>
            <person name="Suzuki M."/>
            <person name="Aoki J."/>
            <person name="Arakawa T."/>
            <person name="Iida J."/>
            <person name="Imamura K."/>
            <person name="Itoh M."/>
            <person name="Kato T."/>
            <person name="Kawaji H."/>
            <person name="Kawagashira N."/>
            <person name="Kawashima T."/>
            <person name="Kojima M."/>
            <person name="Kondo S."/>
            <person name="Konno H."/>
            <person name="Nakano K."/>
            <person name="Ninomiya N."/>
            <person name="Nishio T."/>
            <person name="Okada M."/>
            <person name="Plessy C."/>
            <person name="Shibata K."/>
            <person name="Shiraki T."/>
            <person name="Suzuki S."/>
            <person name="Tagami M."/>
            <person name="Waki K."/>
            <person name="Watahiki A."/>
            <person name="Okamura-Oho Y."/>
            <person name="Suzuki H."/>
            <person name="Kawai J."/>
            <person name="Hayashizaki Y."/>
        </authorList>
    </citation>
    <scope>NUCLEOTIDE SEQUENCE [LARGE SCALE MRNA]</scope>
    <source>
        <strain>C57BL/6J</strain>
        <strain>DBA/2J</strain>
        <tissue>Medulla oblongata</tissue>
        <tissue>Ovary</tissue>
        <tissue>Pancreas</tissue>
    </source>
</reference>
<reference key="2">
    <citation type="journal article" date="2004" name="Genome Res.">
        <title>The status, quality, and expansion of the NIH full-length cDNA project: the Mammalian Gene Collection (MGC).</title>
        <authorList>
            <consortium name="The MGC Project Team"/>
        </authorList>
    </citation>
    <scope>NUCLEOTIDE SEQUENCE [LARGE SCALE MRNA]</scope>
    <source>
        <strain>FVB/N-3</strain>
        <tissue>Mammary tumor</tissue>
    </source>
</reference>
<organism>
    <name type="scientific">Mus musculus</name>
    <name type="common">Mouse</name>
    <dbReference type="NCBI Taxonomy" id="10090"/>
    <lineage>
        <taxon>Eukaryota</taxon>
        <taxon>Metazoa</taxon>
        <taxon>Chordata</taxon>
        <taxon>Craniata</taxon>
        <taxon>Vertebrata</taxon>
        <taxon>Euteleostomi</taxon>
        <taxon>Mammalia</taxon>
        <taxon>Eutheria</taxon>
        <taxon>Euarchontoglires</taxon>
        <taxon>Glires</taxon>
        <taxon>Rodentia</taxon>
        <taxon>Myomorpha</taxon>
        <taxon>Muroidea</taxon>
        <taxon>Muridae</taxon>
        <taxon>Murinae</taxon>
        <taxon>Mus</taxon>
        <taxon>Mus</taxon>
    </lineage>
</organism>
<feature type="chain" id="PRO_0000270196" description="V-type proton ATPase subunit e 1">
    <location>
        <begin position="1"/>
        <end position="81"/>
    </location>
</feature>
<feature type="topological domain" description="Lumenal" evidence="4">
    <location>
        <begin position="1"/>
        <end position="7"/>
    </location>
</feature>
<feature type="transmembrane region" description="Helical" evidence="3">
    <location>
        <begin position="8"/>
        <end position="28"/>
    </location>
</feature>
<feature type="topological domain" description="Cytoplasmic" evidence="4">
    <location>
        <begin position="29"/>
        <end position="35"/>
    </location>
</feature>
<feature type="transmembrane region" description="Helical" evidence="3">
    <location>
        <begin position="36"/>
        <end position="56"/>
    </location>
</feature>
<feature type="topological domain" description="Lumenal" evidence="4">
    <location>
        <begin position="57"/>
        <end position="81"/>
    </location>
</feature>
<feature type="glycosylation site" description="N-linked (GlcNAc...) asparagine" evidence="3">
    <location>
        <position position="70"/>
    </location>
</feature>
<proteinExistence type="inferred from homology"/>
<gene>
    <name type="primary">Atp6v0e1</name>
    <name type="synonym">Atp6v0e</name>
</gene>
<sequence length="81" mass="9340">MAYHGLTVPLIVMSVFWGFVGLLVPWFIPKGPNRGVIITMLVTCSVCCYLFWLIAILAQLNPLFGPQLKNETIWYLKYHWP</sequence>
<dbReference type="EMBL" id="AK007610">
    <property type="protein sequence ID" value="BAB25133.1"/>
    <property type="molecule type" value="mRNA"/>
</dbReference>
<dbReference type="EMBL" id="AK013229">
    <property type="protein sequence ID" value="BAB28727.1"/>
    <property type="molecule type" value="mRNA"/>
</dbReference>
<dbReference type="EMBL" id="AK017760">
    <property type="protein sequence ID" value="BAB30911.1"/>
    <property type="molecule type" value="mRNA"/>
</dbReference>
<dbReference type="EMBL" id="AK030335">
    <property type="protein sequence ID" value="BAC26909.1"/>
    <property type="molecule type" value="mRNA"/>
</dbReference>
<dbReference type="EMBL" id="AK134836">
    <property type="protein sequence ID" value="BAE22305.1"/>
    <property type="molecule type" value="mRNA"/>
</dbReference>
<dbReference type="EMBL" id="AK159669">
    <property type="protein sequence ID" value="BAE35273.1"/>
    <property type="molecule type" value="mRNA"/>
</dbReference>
<dbReference type="EMBL" id="AK168015">
    <property type="protein sequence ID" value="BAE40002.1"/>
    <property type="molecule type" value="mRNA"/>
</dbReference>
<dbReference type="EMBL" id="BC024733">
    <property type="protein sequence ID" value="AAH24733.1"/>
    <property type="molecule type" value="mRNA"/>
</dbReference>
<dbReference type="CCDS" id="CCDS28554.1"/>
<dbReference type="PIR" id="JC7602">
    <property type="entry name" value="JC7602"/>
</dbReference>
<dbReference type="RefSeq" id="NP_079548.1">
    <property type="nucleotide sequence ID" value="NM_025272.2"/>
</dbReference>
<dbReference type="SMR" id="Q9CQD8"/>
<dbReference type="BioGRID" id="198266">
    <property type="interactions" value="2"/>
</dbReference>
<dbReference type="FunCoup" id="Q9CQD8">
    <property type="interactions" value="531"/>
</dbReference>
<dbReference type="STRING" id="10090.ENSMUSP00000127552"/>
<dbReference type="TCDB" id="3.A.2.2.6">
    <property type="family name" value="the h+- or na+-translocating f-type, v-type and a-type atpase (f-atpase) superfamily"/>
</dbReference>
<dbReference type="GlyCosmos" id="Q9CQD8">
    <property type="glycosylation" value="1 site, No reported glycans"/>
</dbReference>
<dbReference type="GlyGen" id="Q9CQD8">
    <property type="glycosylation" value="1 site, 1 N-linked glycan (1 site)"/>
</dbReference>
<dbReference type="PhosphoSitePlus" id="Q9CQD8"/>
<dbReference type="PaxDb" id="10090-ENSMUSP00000127552"/>
<dbReference type="Antibodypedia" id="73907">
    <property type="antibodies" value="11 antibodies from 4 providers"/>
</dbReference>
<dbReference type="DNASU" id="11974"/>
<dbReference type="Ensembl" id="ENSMUST00000015719.16">
    <property type="protein sequence ID" value="ENSMUSP00000015719.9"/>
    <property type="gene ID" value="ENSMUSG00000015575.16"/>
</dbReference>
<dbReference type="Ensembl" id="ENSMUST00000167352.2">
    <property type="protein sequence ID" value="ENSMUSP00000127552.2"/>
    <property type="gene ID" value="ENSMUSG00000015575.16"/>
</dbReference>
<dbReference type="GeneID" id="11974"/>
<dbReference type="KEGG" id="mmu:11974"/>
<dbReference type="UCSC" id="uc008beh.1">
    <property type="organism name" value="mouse"/>
</dbReference>
<dbReference type="AGR" id="MGI:1328318"/>
<dbReference type="CTD" id="11974"/>
<dbReference type="MGI" id="MGI:1328318">
    <property type="gene designation" value="Atp6v0e"/>
</dbReference>
<dbReference type="VEuPathDB" id="HostDB:ENSMUSG00000015575"/>
<dbReference type="eggNOG" id="KOG3500">
    <property type="taxonomic scope" value="Eukaryota"/>
</dbReference>
<dbReference type="GeneTree" id="ENSGT00940000156866"/>
<dbReference type="HOGENOM" id="CLU_170555_0_1_1"/>
<dbReference type="InParanoid" id="Q9CQD8"/>
<dbReference type="OMA" id="TDAIWYL"/>
<dbReference type="OrthoDB" id="1508846at2759"/>
<dbReference type="PhylomeDB" id="Q9CQD8"/>
<dbReference type="TreeFam" id="TF300290"/>
<dbReference type="Reactome" id="R-MMU-1222556">
    <property type="pathway name" value="ROS and RNS production in phagocytes"/>
</dbReference>
<dbReference type="Reactome" id="R-MMU-77387">
    <property type="pathway name" value="Insulin receptor recycling"/>
</dbReference>
<dbReference type="Reactome" id="R-MMU-917977">
    <property type="pathway name" value="Transferrin endocytosis and recycling"/>
</dbReference>
<dbReference type="Reactome" id="R-MMU-9639288">
    <property type="pathway name" value="Amino acids regulate mTORC1"/>
</dbReference>
<dbReference type="Reactome" id="R-MMU-983712">
    <property type="pathway name" value="Ion channel transport"/>
</dbReference>
<dbReference type="BioGRID-ORCS" id="11974">
    <property type="hits" value="16 hits in 79 CRISPR screens"/>
</dbReference>
<dbReference type="ChiTaRS" id="Atp6v0e">
    <property type="organism name" value="mouse"/>
</dbReference>
<dbReference type="PRO" id="PR:Q9CQD8"/>
<dbReference type="Proteomes" id="UP000000589">
    <property type="component" value="Chromosome 17"/>
</dbReference>
<dbReference type="RNAct" id="Q9CQD8">
    <property type="molecule type" value="protein"/>
</dbReference>
<dbReference type="Bgee" id="ENSMUSG00000015575">
    <property type="expression patterns" value="Expressed in choroid plexus of fourth ventricle and 270 other cell types or tissues"/>
</dbReference>
<dbReference type="ExpressionAtlas" id="Q9CQD8">
    <property type="expression patterns" value="baseline and differential"/>
</dbReference>
<dbReference type="GO" id="GO:0016020">
    <property type="term" value="C:membrane"/>
    <property type="evidence" value="ECO:0000266"/>
    <property type="project" value="MGI"/>
</dbReference>
<dbReference type="GO" id="GO:0033176">
    <property type="term" value="C:proton-transporting V-type ATPase complex"/>
    <property type="evidence" value="ECO:0000314"/>
    <property type="project" value="MGI"/>
</dbReference>
<dbReference type="GO" id="GO:0033179">
    <property type="term" value="C:proton-transporting V-type ATPase, V0 domain"/>
    <property type="evidence" value="ECO:0000266"/>
    <property type="project" value="MGI"/>
</dbReference>
<dbReference type="GO" id="GO:0046961">
    <property type="term" value="F:proton-transporting ATPase activity, rotational mechanism"/>
    <property type="evidence" value="ECO:0007669"/>
    <property type="project" value="Ensembl"/>
</dbReference>
<dbReference type="GO" id="GO:1902600">
    <property type="term" value="P:proton transmembrane transport"/>
    <property type="evidence" value="ECO:0000266"/>
    <property type="project" value="MGI"/>
</dbReference>
<dbReference type="InterPro" id="IPR008389">
    <property type="entry name" value="ATPase_V0-cplx_e1/e2_su"/>
</dbReference>
<dbReference type="InterPro" id="IPR017385">
    <property type="entry name" value="ATPase_V0-cplx_e1/e2_su_met"/>
</dbReference>
<dbReference type="PANTHER" id="PTHR12263:SF5">
    <property type="entry name" value="V-TYPE PROTON ATPASE SUBUNIT E 1"/>
    <property type="match status" value="1"/>
</dbReference>
<dbReference type="PANTHER" id="PTHR12263">
    <property type="entry name" value="VACUOLAR ATP SYNTHASE SUBUNIT H"/>
    <property type="match status" value="1"/>
</dbReference>
<dbReference type="Pfam" id="PF05493">
    <property type="entry name" value="ATP_synt_H"/>
    <property type="match status" value="1"/>
</dbReference>
<dbReference type="PIRSF" id="PIRSF038097">
    <property type="entry name" value="V-ATP_synth_e1/e2"/>
    <property type="match status" value="1"/>
</dbReference>
<accession>Q9CQD8</accession>